<gene>
    <name type="primary">ARP7</name>
    <name type="synonym">SWP61</name>
    <name type="ordered locus">YPR034W</name>
    <name type="ORF">YP9367.14</name>
</gene>
<comment type="function">
    <text evidence="1 2 3 4 5 6 9 10">Component of the chromatin structure remodeling complex (RSC), which is involved in transcription regulation and nucleosome positioning. RSC is responsible for the transfer of a histone octamer from a nucleosome core particle to naked DNA. The reaction requires ATP and involves an activated RSC-nucleosome intermediate. Remodeling reaction also involves DNA translocation, DNA twist and conformational change. As a reconfigurer of centromeric and flanking nucleosomes, RSC complex is required both for proper kinetochore function in chromosome segregation and, via a PKC1-dependent signaling pathway, for organization of the cellular cytoskeleton. This subunit is involved in transcriptional regulation. Heterodimer of ARP7 and ARP9 functions with HMG box proteins to facilitate proper chromatin architecture. Heterodimer formation is necessary for assembly into RSC complex. Part of the SWI/SNF complex, an ATP-dependent chromatin remodeling complex, is required for the positive and negative regulation of gene expression of a large number of genes. It changes chromatin structure by altering DNA-histone contacts within a nucleosome, leading eventually to a change in nucleosome position, thus facilitating or repressing binding of gene-specific transcription factors.</text>
</comment>
<comment type="subunit">
    <text evidence="5 8 10">Forms a heterodimer with ARP9. Interacts with NPL6. Component of the two forms of the RSC complex composed of at least either RSC1 or RSC2, and ARP7, ARP9, LDB7, NPL6, RSC3, RSC30, RSC4, RSC58, RSC6, RSC8, RSC9, SFH1, STH1, HTL1 and probably RTT102. The complexes interact with histone and histone variant components of centromeric chromatin. Component of the SWI/SNF global transcription activator complex. The 1.14 MDa SWI/SNF complex is composed of 11 different subunits: one copy each of SWI1, SNF2/SWI2, SNF5, SNF12/SWP73, ARP7/SWP61, ARP9/SWP59; two copies each of SWI3, SNF6, SNF11, SWP82; and three copies of TAF14/SWP29.</text>
</comment>
<comment type="interaction">
    <interactant intactId="EBI-2962">
        <id>Q12406</id>
    </interactant>
    <interactant intactId="EBI-2972">
        <id>Q05123</id>
        <label>ARP9</label>
    </interactant>
    <organismsDiffer>false</organismsDiffer>
    <experiments>7</experiments>
</comment>
<comment type="subcellular location">
    <subcellularLocation>
        <location evidence="5">Nucleus</location>
    </subcellularLocation>
    <text>Localizes to centromeric and flanking chromatin. Association with these loci is dependent on STH1.</text>
</comment>
<comment type="miscellaneous">
    <text evidence="7">Present with 1360 molecules/cell in log phase SD medium.</text>
</comment>
<comment type="similarity">
    <text evidence="11">Belongs to the actin family.</text>
</comment>
<keyword id="KW-0002">3D-structure</keyword>
<keyword id="KW-0156">Chromatin regulator</keyword>
<keyword id="KW-0903">Direct protein sequencing</keyword>
<keyword id="KW-0539">Nucleus</keyword>
<keyword id="KW-1185">Reference proteome</keyword>
<keyword id="KW-0804">Transcription</keyword>
<keyword id="KW-0805">Transcription regulation</keyword>
<evidence type="ECO:0000269" key="1">
    <source>
    </source>
</evidence>
<evidence type="ECO:0000269" key="2">
    <source>
    </source>
</evidence>
<evidence type="ECO:0000269" key="3">
    <source>
    </source>
</evidence>
<evidence type="ECO:0000269" key="4">
    <source>
    </source>
</evidence>
<evidence type="ECO:0000269" key="5">
    <source>
    </source>
</evidence>
<evidence type="ECO:0000269" key="6">
    <source>
    </source>
</evidence>
<evidence type="ECO:0000269" key="7">
    <source>
    </source>
</evidence>
<evidence type="ECO:0000269" key="8">
    <source>
    </source>
</evidence>
<evidence type="ECO:0000269" key="9">
    <source>
    </source>
</evidence>
<evidence type="ECO:0000269" key="10">
    <source>
    </source>
</evidence>
<evidence type="ECO:0000305" key="11"/>
<evidence type="ECO:0007829" key="12">
    <source>
        <dbReference type="PDB" id="3WEE"/>
    </source>
</evidence>
<evidence type="ECO:0007829" key="13">
    <source>
        <dbReference type="PDB" id="4I6M"/>
    </source>
</evidence>
<evidence type="ECO:0007829" key="14">
    <source>
        <dbReference type="PDB" id="5TGC"/>
    </source>
</evidence>
<proteinExistence type="evidence at protein level"/>
<sequence>MTLNRKCVVIHNGSHRTVAGFSNVELPQCIIPSSYIKRTDEGGEAEFIFGTYNMIDAAAEKRNGDEVYTLVDSQGLPYNWDALEMQWRYLYDTQLKVSPEELPLVITMPATNGKPDMAILERYYELAFDKLNVPVFQIVIEPLAIALSMGKSSAFVIDIGASGCNVTPIIDGIVVKNAVVRSKFGGDFLDFQVHERLAPLIKEENDMENMADEQKRSTDVWYEASTWIQQFKSTMLQVSEKDLFELERYYKEQADIYAKQQEQLKQMDQQLQYTALTGSPNNPLVQKKNFLFKPLNKTLTLDLKECYQFAEYLFKPQLISDKFSPEDGLGPLMAKSVKKAGASINSMKANTSTNPNGLGTSHINTNVGDNNSTASSSNISPEQVYSLLLTNVIITGSTSLIEGMEQRIIKELSIRFPQYKLTTFANQVMMDRKIQGWLGALTMANLPSWSLGKWYSKEDYETLKRDRKQSQATNATN</sequence>
<organism>
    <name type="scientific">Saccharomyces cerevisiae (strain ATCC 204508 / S288c)</name>
    <name type="common">Baker's yeast</name>
    <dbReference type="NCBI Taxonomy" id="559292"/>
    <lineage>
        <taxon>Eukaryota</taxon>
        <taxon>Fungi</taxon>
        <taxon>Dikarya</taxon>
        <taxon>Ascomycota</taxon>
        <taxon>Saccharomycotina</taxon>
        <taxon>Saccharomycetes</taxon>
        <taxon>Saccharomycetales</taxon>
        <taxon>Saccharomycetaceae</taxon>
        <taxon>Saccharomyces</taxon>
    </lineage>
</organism>
<dbReference type="EMBL" id="Z71255">
    <property type="protein sequence ID" value="CAA94984.1"/>
    <property type="molecule type" value="Genomic_DNA"/>
</dbReference>
<dbReference type="EMBL" id="Z49274">
    <property type="protein sequence ID" value="CAA89288.1"/>
    <property type="molecule type" value="Genomic_DNA"/>
</dbReference>
<dbReference type="EMBL" id="BK006949">
    <property type="protein sequence ID" value="DAA11460.1"/>
    <property type="molecule type" value="Genomic_DNA"/>
</dbReference>
<dbReference type="PIR" id="S54508">
    <property type="entry name" value="S54508"/>
</dbReference>
<dbReference type="RefSeq" id="NP_015359.1">
    <property type="nucleotide sequence ID" value="NM_001184131.1"/>
</dbReference>
<dbReference type="PDB" id="3WEE">
    <property type="method" value="X-ray"/>
    <property type="resolution" value="3.10 A"/>
    <property type="chains" value="B=1-477"/>
</dbReference>
<dbReference type="PDB" id="4I6M">
    <property type="method" value="X-ray"/>
    <property type="resolution" value="2.80 A"/>
    <property type="chains" value="A=1-477"/>
</dbReference>
<dbReference type="PDB" id="5TGC">
    <property type="method" value="X-ray"/>
    <property type="resolution" value="3.25 A"/>
    <property type="chains" value="A/D=1-477"/>
</dbReference>
<dbReference type="PDB" id="6KW3">
    <property type="method" value="EM"/>
    <property type="resolution" value="7.13 A"/>
    <property type="chains" value="f=1-477"/>
</dbReference>
<dbReference type="PDB" id="6KW4">
    <property type="method" value="EM"/>
    <property type="resolution" value="7.55 A"/>
    <property type="chains" value="f=1-477"/>
</dbReference>
<dbReference type="PDB" id="6KW5">
    <property type="method" value="EM"/>
    <property type="resolution" value="10.13 A"/>
    <property type="chains" value="f=1-477"/>
</dbReference>
<dbReference type="PDB" id="6TDA">
    <property type="method" value="EM"/>
    <property type="resolution" value="15.00 A"/>
    <property type="chains" value="T=1-477"/>
</dbReference>
<dbReference type="PDB" id="6UXW">
    <property type="method" value="EM"/>
    <property type="resolution" value="8.96 A"/>
    <property type="chains" value="P=1-477"/>
</dbReference>
<dbReference type="PDB" id="6V92">
    <property type="method" value="EM"/>
    <property type="resolution" value="20.00 A"/>
    <property type="chains" value="A=1-477"/>
</dbReference>
<dbReference type="PDB" id="6VZ4">
    <property type="method" value="EM"/>
    <property type="resolution" value="3.90 A"/>
    <property type="chains" value="L=1-477"/>
</dbReference>
<dbReference type="PDB" id="6VZG">
    <property type="method" value="EM"/>
    <property type="resolution" value="4.20 A"/>
    <property type="chains" value="L=1-477"/>
</dbReference>
<dbReference type="PDB" id="7C4J">
    <property type="method" value="EM"/>
    <property type="resolution" value="2.89 A"/>
    <property type="chains" value="K=1-477"/>
</dbReference>
<dbReference type="PDB" id="7EGP">
    <property type="method" value="EM"/>
    <property type="resolution" value="6.90 A"/>
    <property type="chains" value="M=1-477"/>
</dbReference>
<dbReference type="PDBsum" id="3WEE"/>
<dbReference type="PDBsum" id="4I6M"/>
<dbReference type="PDBsum" id="5TGC"/>
<dbReference type="PDBsum" id="6KW3"/>
<dbReference type="PDBsum" id="6KW4"/>
<dbReference type="PDBsum" id="6KW5"/>
<dbReference type="PDBsum" id="6TDA"/>
<dbReference type="PDBsum" id="6UXW"/>
<dbReference type="PDBsum" id="6V92"/>
<dbReference type="PDBsum" id="6VZ4"/>
<dbReference type="PDBsum" id="6VZG"/>
<dbReference type="PDBsum" id="7C4J"/>
<dbReference type="PDBsum" id="7EGP"/>
<dbReference type="EMDB" id="EMD-0777"/>
<dbReference type="EMDB" id="EMD-0778"/>
<dbReference type="EMDB" id="EMD-0779"/>
<dbReference type="EMDB" id="EMD-10465"/>
<dbReference type="EMDB" id="EMD-20934"/>
<dbReference type="EMDB" id="EMD-21114"/>
<dbReference type="EMDB" id="EMD-21484"/>
<dbReference type="EMDB" id="EMD-21489"/>
<dbReference type="EMDB" id="EMD-30285"/>
<dbReference type="EMDB" id="EMD-31137"/>
<dbReference type="SMR" id="Q12406"/>
<dbReference type="BioGRID" id="36212">
    <property type="interactions" value="350"/>
</dbReference>
<dbReference type="ComplexPortal" id="CPX-1150">
    <property type="entry name" value="SWI/SNF chromatin remodelling complex"/>
</dbReference>
<dbReference type="ComplexPortal" id="CPX-1888">
    <property type="entry name" value="RSC chromatin remodelling complex, variant RSC2"/>
</dbReference>
<dbReference type="ComplexPortal" id="CPX-1889">
    <property type="entry name" value="RSC chromatin remodelling complex, variant RSC1"/>
</dbReference>
<dbReference type="DIP" id="DIP-6351N"/>
<dbReference type="FunCoup" id="Q12406">
    <property type="interactions" value="394"/>
</dbReference>
<dbReference type="IntAct" id="Q12406">
    <property type="interactions" value="79"/>
</dbReference>
<dbReference type="MINT" id="Q12406"/>
<dbReference type="STRING" id="4932.YPR034W"/>
<dbReference type="iPTMnet" id="Q12406"/>
<dbReference type="PaxDb" id="4932-YPR034W"/>
<dbReference type="PeptideAtlas" id="Q12406"/>
<dbReference type="EnsemblFungi" id="YPR034W_mRNA">
    <property type="protein sequence ID" value="YPR034W"/>
    <property type="gene ID" value="YPR034W"/>
</dbReference>
<dbReference type="GeneID" id="856146"/>
<dbReference type="KEGG" id="sce:YPR034W"/>
<dbReference type="AGR" id="SGD:S000006238"/>
<dbReference type="SGD" id="S000006238">
    <property type="gene designation" value="ARP7"/>
</dbReference>
<dbReference type="VEuPathDB" id="FungiDB:YPR034W"/>
<dbReference type="eggNOG" id="KOG0679">
    <property type="taxonomic scope" value="Eukaryota"/>
</dbReference>
<dbReference type="HOGENOM" id="CLU_566415_0_0_1"/>
<dbReference type="InParanoid" id="Q12406"/>
<dbReference type="OMA" id="WDRQFGA"/>
<dbReference type="OrthoDB" id="5132116at2759"/>
<dbReference type="BioCyc" id="YEAST:G3O-34193-MONOMER"/>
<dbReference type="BioGRID-ORCS" id="856146">
    <property type="hits" value="10 hits in 10 CRISPR screens"/>
</dbReference>
<dbReference type="EvolutionaryTrace" id="Q12406"/>
<dbReference type="PRO" id="PR:Q12406"/>
<dbReference type="Proteomes" id="UP000002311">
    <property type="component" value="Chromosome XVI"/>
</dbReference>
<dbReference type="RNAct" id="Q12406">
    <property type="molecule type" value="protein"/>
</dbReference>
<dbReference type="GO" id="GO:0000785">
    <property type="term" value="C:chromatin"/>
    <property type="evidence" value="ECO:0000303"/>
    <property type="project" value="ComplexPortal"/>
</dbReference>
<dbReference type="GO" id="GO:0035267">
    <property type="term" value="C:NuA4 histone acetyltransferase complex"/>
    <property type="evidence" value="ECO:0000318"/>
    <property type="project" value="GO_Central"/>
</dbReference>
<dbReference type="GO" id="GO:0005634">
    <property type="term" value="C:nucleus"/>
    <property type="evidence" value="ECO:0000314"/>
    <property type="project" value="SGD"/>
</dbReference>
<dbReference type="GO" id="GO:0016586">
    <property type="term" value="C:RSC-type complex"/>
    <property type="evidence" value="ECO:0000314"/>
    <property type="project" value="UniProtKB"/>
</dbReference>
<dbReference type="GO" id="GO:0016514">
    <property type="term" value="C:SWI/SNF complex"/>
    <property type="evidence" value="ECO:0000314"/>
    <property type="project" value="UniProtKB"/>
</dbReference>
<dbReference type="GO" id="GO:0003682">
    <property type="term" value="F:chromatin binding"/>
    <property type="evidence" value="ECO:0000318"/>
    <property type="project" value="GO_Central"/>
</dbReference>
<dbReference type="GO" id="GO:0005198">
    <property type="term" value="F:structural molecule activity"/>
    <property type="evidence" value="ECO:0000315"/>
    <property type="project" value="UniProtKB"/>
</dbReference>
<dbReference type="GO" id="GO:0006325">
    <property type="term" value="P:chromatin organization"/>
    <property type="evidence" value="ECO:0000316"/>
    <property type="project" value="UniProtKB"/>
</dbReference>
<dbReference type="GO" id="GO:0006338">
    <property type="term" value="P:chromatin remodeling"/>
    <property type="evidence" value="ECO:0000314"/>
    <property type="project" value="UniProtKB"/>
</dbReference>
<dbReference type="GO" id="GO:0006337">
    <property type="term" value="P:nucleosome disassembly"/>
    <property type="evidence" value="ECO:0000314"/>
    <property type="project" value="SGD"/>
</dbReference>
<dbReference type="GO" id="GO:0045944">
    <property type="term" value="P:positive regulation of transcription by RNA polymerase II"/>
    <property type="evidence" value="ECO:0000315"/>
    <property type="project" value="SGD"/>
</dbReference>
<dbReference type="GO" id="GO:0006355">
    <property type="term" value="P:regulation of DNA-templated transcription"/>
    <property type="evidence" value="ECO:0000315"/>
    <property type="project" value="UniProtKB"/>
</dbReference>
<dbReference type="GO" id="GO:0006357">
    <property type="term" value="P:regulation of transcription by RNA polymerase II"/>
    <property type="evidence" value="ECO:0000314"/>
    <property type="project" value="ComplexPortal"/>
</dbReference>
<dbReference type="GO" id="GO:0006368">
    <property type="term" value="P:transcription elongation by RNA polymerase II"/>
    <property type="evidence" value="ECO:0000314"/>
    <property type="project" value="SGD"/>
</dbReference>
<dbReference type="CDD" id="cd10212">
    <property type="entry name" value="ASKHA_NBD_ScArp7-like"/>
    <property type="match status" value="1"/>
</dbReference>
<dbReference type="DisProt" id="DP00874"/>
<dbReference type="FunFam" id="3.30.420.40:FF:000343">
    <property type="entry name" value="Chromatin remodeling Snf/Swi complex subunit"/>
    <property type="match status" value="1"/>
</dbReference>
<dbReference type="Gene3D" id="3.30.420.40">
    <property type="match status" value="2"/>
</dbReference>
<dbReference type="Gene3D" id="3.90.640.10">
    <property type="entry name" value="Actin, Chain A, domain 4"/>
    <property type="match status" value="1"/>
</dbReference>
<dbReference type="InterPro" id="IPR004000">
    <property type="entry name" value="Actin"/>
</dbReference>
<dbReference type="InterPro" id="IPR043129">
    <property type="entry name" value="ATPase_NBD"/>
</dbReference>
<dbReference type="PANTHER" id="PTHR11937">
    <property type="entry name" value="ACTIN"/>
    <property type="match status" value="1"/>
</dbReference>
<dbReference type="Pfam" id="PF00022">
    <property type="entry name" value="Actin"/>
    <property type="match status" value="1"/>
</dbReference>
<dbReference type="SMART" id="SM00268">
    <property type="entry name" value="ACTIN"/>
    <property type="match status" value="1"/>
</dbReference>
<dbReference type="SUPFAM" id="SSF53067">
    <property type="entry name" value="Actin-like ATPase domain"/>
    <property type="match status" value="2"/>
</dbReference>
<name>ARP7_YEAST</name>
<feature type="chain" id="PRO_0000089122" description="Actin-related protein 7">
    <location>
        <begin position="1"/>
        <end position="477"/>
    </location>
</feature>
<feature type="mutagenesis site" description="Impaired heterodimerization with ARP9. Temperature-sensitive phenotype. Moderate suppressor of Ty phenotype." evidence="6 10">
    <original>A</original>
    <variation>P</variation>
    <location>
        <position position="19"/>
    </location>
</feature>
<feature type="mutagenesis site" description="Impaired heterodimerization with ARP9. Temperature-sensitive phenotype. Moderate suppressor of Ty phenotype." evidence="6 10">
    <original>S</original>
    <variation>F</variation>
    <location>
        <position position="33"/>
    </location>
</feature>
<feature type="mutagenesis site" description="Temperature-sensitive phenotype. Moderate suppressor of Ty phenotype." evidence="10">
    <original>G</original>
    <variation>V</variation>
    <location>
        <position position="396"/>
    </location>
</feature>
<feature type="mutagenesis site" description="Impaired heterodimerization with ARP9. Temperature-sensitive phenotype. Moderate suppressor of Ty phenotype." evidence="6 10">
    <original>E</original>
    <variation>K</variation>
    <location>
        <position position="411"/>
    </location>
</feature>
<feature type="strand" evidence="13">
    <location>
        <begin position="8"/>
        <end position="12"/>
    </location>
</feature>
<feature type="strand" evidence="13">
    <location>
        <begin position="14"/>
        <end position="21"/>
    </location>
</feature>
<feature type="strand" evidence="13">
    <location>
        <begin position="24"/>
        <end position="26"/>
    </location>
</feature>
<feature type="strand" evidence="13">
    <location>
        <begin position="28"/>
        <end position="37"/>
    </location>
</feature>
<feature type="strand" evidence="12">
    <location>
        <begin position="41"/>
        <end position="43"/>
    </location>
</feature>
<feature type="strand" evidence="12">
    <location>
        <begin position="45"/>
        <end position="48"/>
    </location>
</feature>
<feature type="helix" evidence="13">
    <location>
        <begin position="51"/>
        <end position="59"/>
    </location>
</feature>
<feature type="strand" evidence="13">
    <location>
        <begin position="66"/>
        <end position="71"/>
    </location>
</feature>
<feature type="strand" evidence="12">
    <location>
        <begin position="75"/>
        <end position="77"/>
    </location>
</feature>
<feature type="helix" evidence="13">
    <location>
        <begin position="80"/>
        <end position="93"/>
    </location>
</feature>
<feature type="turn" evidence="12">
    <location>
        <begin position="99"/>
        <end position="101"/>
    </location>
</feature>
<feature type="strand" evidence="13">
    <location>
        <begin position="104"/>
        <end position="108"/>
    </location>
</feature>
<feature type="strand" evidence="12">
    <location>
        <begin position="112"/>
        <end position="114"/>
    </location>
</feature>
<feature type="helix" evidence="13">
    <location>
        <begin position="116"/>
        <end position="127"/>
    </location>
</feature>
<feature type="turn" evidence="13">
    <location>
        <begin position="128"/>
        <end position="131"/>
    </location>
</feature>
<feature type="strand" evidence="13">
    <location>
        <begin position="134"/>
        <end position="140"/>
    </location>
</feature>
<feature type="helix" evidence="13">
    <location>
        <begin position="141"/>
        <end position="147"/>
    </location>
</feature>
<feature type="turn" evidence="13">
    <location>
        <begin position="148"/>
        <end position="150"/>
    </location>
</feature>
<feature type="strand" evidence="13">
    <location>
        <begin position="152"/>
        <end position="159"/>
    </location>
</feature>
<feature type="strand" evidence="13">
    <location>
        <begin position="164"/>
        <end position="170"/>
    </location>
</feature>
<feature type="helix" evidence="13">
    <location>
        <begin position="176"/>
        <end position="178"/>
    </location>
</feature>
<feature type="helix" evidence="13">
    <location>
        <begin position="186"/>
        <end position="197"/>
    </location>
</feature>
<feature type="helix" evidence="13">
    <location>
        <begin position="198"/>
        <end position="200"/>
    </location>
</feature>
<feature type="helix" evidence="13">
    <location>
        <begin position="217"/>
        <end position="225"/>
    </location>
</feature>
<feature type="helix" evidence="13">
    <location>
        <begin position="227"/>
        <end position="234"/>
    </location>
</feature>
<feature type="helix" evidence="13">
    <location>
        <begin position="243"/>
        <end position="261"/>
    </location>
</feature>
<feature type="helix" evidence="13">
    <location>
        <begin position="283"/>
        <end position="285"/>
    </location>
</feature>
<feature type="strand" evidence="13">
    <location>
        <begin position="287"/>
        <end position="292"/>
    </location>
</feature>
<feature type="helix" evidence="13">
    <location>
        <begin position="293"/>
        <end position="295"/>
    </location>
</feature>
<feature type="strand" evidence="13">
    <location>
        <begin position="297"/>
        <end position="302"/>
    </location>
</feature>
<feature type="helix" evidence="13">
    <location>
        <begin position="303"/>
        <end position="314"/>
    </location>
</feature>
<feature type="helix" evidence="13">
    <location>
        <begin position="316"/>
        <end position="318"/>
    </location>
</feature>
<feature type="strand" evidence="14">
    <location>
        <begin position="321"/>
        <end position="323"/>
    </location>
</feature>
<feature type="helix" evidence="13">
    <location>
        <begin position="325"/>
        <end position="327"/>
    </location>
</feature>
<feature type="helix" evidence="13">
    <location>
        <begin position="329"/>
        <end position="338"/>
    </location>
</feature>
<feature type="turn" evidence="13">
    <location>
        <begin position="339"/>
        <end position="342"/>
    </location>
</feature>
<feature type="helix" evidence="12">
    <location>
        <begin position="344"/>
        <end position="347"/>
    </location>
</feature>
<feature type="strand" evidence="14">
    <location>
        <begin position="351"/>
        <end position="353"/>
    </location>
</feature>
<feature type="helix" evidence="13">
    <location>
        <begin position="381"/>
        <end position="388"/>
    </location>
</feature>
<feature type="strand" evidence="13">
    <location>
        <begin position="391"/>
        <end position="396"/>
    </location>
</feature>
<feature type="helix" evidence="13">
    <location>
        <begin position="397"/>
        <end position="400"/>
    </location>
</feature>
<feature type="helix" evidence="13">
    <location>
        <begin position="404"/>
        <end position="415"/>
    </location>
</feature>
<feature type="strand" evidence="12">
    <location>
        <begin position="423"/>
        <end position="425"/>
    </location>
</feature>
<feature type="helix" evidence="13">
    <location>
        <begin position="429"/>
        <end position="433"/>
    </location>
</feature>
<feature type="helix" evidence="13">
    <location>
        <begin position="435"/>
        <end position="444"/>
    </location>
</feature>
<feature type="helix" evidence="13">
    <location>
        <begin position="449"/>
        <end position="451"/>
    </location>
</feature>
<feature type="strand" evidence="13">
    <location>
        <begin position="454"/>
        <end position="456"/>
    </location>
</feature>
<feature type="helix" evidence="13">
    <location>
        <begin position="457"/>
        <end position="463"/>
    </location>
</feature>
<accession>Q12406</accession>
<accession>D6W444</accession>
<reference key="1">
    <citation type="journal article" date="1997" name="Nature">
        <title>The nucleotide sequence of Saccharomyces cerevisiae chromosome XVI.</title>
        <authorList>
            <person name="Bussey H."/>
            <person name="Storms R.K."/>
            <person name="Ahmed A."/>
            <person name="Albermann K."/>
            <person name="Allen E."/>
            <person name="Ansorge W."/>
            <person name="Araujo R."/>
            <person name="Aparicio A."/>
            <person name="Barrell B.G."/>
            <person name="Badcock K."/>
            <person name="Benes V."/>
            <person name="Botstein D."/>
            <person name="Bowman S."/>
            <person name="Brueckner M."/>
            <person name="Carpenter J."/>
            <person name="Cherry J.M."/>
            <person name="Chung E."/>
            <person name="Churcher C.M."/>
            <person name="Coster F."/>
            <person name="Davis K."/>
            <person name="Davis R.W."/>
            <person name="Dietrich F.S."/>
            <person name="Delius H."/>
            <person name="DiPaolo T."/>
            <person name="Dubois E."/>
            <person name="Duesterhoeft A."/>
            <person name="Duncan M."/>
            <person name="Floeth M."/>
            <person name="Fortin N."/>
            <person name="Friesen J.D."/>
            <person name="Fritz C."/>
            <person name="Goffeau A."/>
            <person name="Hall J."/>
            <person name="Hebling U."/>
            <person name="Heumann K."/>
            <person name="Hilbert H."/>
            <person name="Hillier L.W."/>
            <person name="Hunicke-Smith S."/>
            <person name="Hyman R.W."/>
            <person name="Johnston M."/>
            <person name="Kalman S."/>
            <person name="Kleine K."/>
            <person name="Komp C."/>
            <person name="Kurdi O."/>
            <person name="Lashkari D."/>
            <person name="Lew H."/>
            <person name="Lin A."/>
            <person name="Lin D."/>
            <person name="Louis E.J."/>
            <person name="Marathe R."/>
            <person name="Messenguy F."/>
            <person name="Mewes H.-W."/>
            <person name="Mirtipati S."/>
            <person name="Moestl D."/>
            <person name="Mueller-Auer S."/>
            <person name="Namath A."/>
            <person name="Nentwich U."/>
            <person name="Oefner P."/>
            <person name="Pearson D."/>
            <person name="Petel F.X."/>
            <person name="Pohl T.M."/>
            <person name="Purnelle B."/>
            <person name="Rajandream M.A."/>
            <person name="Rechmann S."/>
            <person name="Rieger M."/>
            <person name="Riles L."/>
            <person name="Roberts D."/>
            <person name="Schaefer M."/>
            <person name="Scharfe M."/>
            <person name="Scherens B."/>
            <person name="Schramm S."/>
            <person name="Schroeder M."/>
            <person name="Sdicu A.-M."/>
            <person name="Tettelin H."/>
            <person name="Urrestarazu L.A."/>
            <person name="Ushinsky S."/>
            <person name="Vierendeels F."/>
            <person name="Vissers S."/>
            <person name="Voss H."/>
            <person name="Walsh S.V."/>
            <person name="Wambutt R."/>
            <person name="Wang Y."/>
            <person name="Wedler E."/>
            <person name="Wedler H."/>
            <person name="Winnett E."/>
            <person name="Zhong W.-W."/>
            <person name="Zollner A."/>
            <person name="Vo D.H."/>
            <person name="Hani J."/>
        </authorList>
    </citation>
    <scope>NUCLEOTIDE SEQUENCE [LARGE SCALE GENOMIC DNA]</scope>
    <source>
        <strain>ATCC 204508 / S288c</strain>
    </source>
</reference>
<reference key="2">
    <citation type="journal article" date="2014" name="G3 (Bethesda)">
        <title>The reference genome sequence of Saccharomyces cerevisiae: Then and now.</title>
        <authorList>
            <person name="Engel S.R."/>
            <person name="Dietrich F.S."/>
            <person name="Fisk D.G."/>
            <person name="Binkley G."/>
            <person name="Balakrishnan R."/>
            <person name="Costanzo M.C."/>
            <person name="Dwight S.S."/>
            <person name="Hitz B.C."/>
            <person name="Karra K."/>
            <person name="Nash R.S."/>
            <person name="Weng S."/>
            <person name="Wong E.D."/>
            <person name="Lloyd P."/>
            <person name="Skrzypek M.S."/>
            <person name="Miyasato S.R."/>
            <person name="Simison M."/>
            <person name="Cherry J.M."/>
        </authorList>
    </citation>
    <scope>GENOME REANNOTATION</scope>
    <source>
        <strain>ATCC 204508 / S288c</strain>
    </source>
</reference>
<reference key="3">
    <citation type="journal article" date="1998" name="Mol. Cell">
        <title>Two actin-related proteins are shared functional components of the chromatin-remodeling complexes RSC and SWI/SNF.</title>
        <authorList>
            <person name="Cairns B.R."/>
            <person name="Erdjument-Bromage H."/>
            <person name="Tempst P."/>
            <person name="Winston F."/>
            <person name="Kornberg R.D."/>
        </authorList>
    </citation>
    <scope>PROTEIN SEQUENCE OF 184-196; 217-232 AND 289-297</scope>
    <scope>FUNCTION</scope>
    <scope>IDENTIFICATION IN THE RSC AND SWI/SNF COMPLEXES</scope>
    <scope>MUTAGENESIS OF ALA-19; SER-33; GLY-396 AND GLU-411</scope>
</reference>
<reference key="4">
    <citation type="journal article" date="1996" name="Cell">
        <title>RSC, an essential, abundant chromatin-remodeling complex.</title>
        <authorList>
            <person name="Cairns B.R."/>
            <person name="Lorch Y."/>
            <person name="Li Y."/>
            <person name="Zhang M."/>
            <person name="Lacomis L."/>
            <person name="Erdjument-Bromage H."/>
            <person name="Tempst P."/>
            <person name="Du J."/>
            <person name="Laurent B.C."/>
            <person name="Kornberg R.D."/>
        </authorList>
    </citation>
    <scope>FUNCTION OF THE RSC COMPLEX</scope>
    <scope>COMPOSITION OF THE RSC COMPLEX</scope>
</reference>
<reference key="5">
    <citation type="journal article" date="1997" name="Yeast">
        <title>Who's who among the Saccharomyces cerevisiae actin-related proteins? A classification and nomenclature proposal for a large family.</title>
        <authorList>
            <person name="Poch O."/>
            <person name="Winsor B."/>
        </authorList>
    </citation>
    <scope>GENE NAME</scope>
</reference>
<reference key="6">
    <citation type="journal article" date="1999" name="Cell">
        <title>Histone octamer transfer by a chromatin-remodeling complex.</title>
        <authorList>
            <person name="Lorch Y."/>
            <person name="Zhang M."/>
            <person name="Kornberg R.D."/>
        </authorList>
    </citation>
    <scope>FUNCTION OF THE RSC COMPLEX</scope>
</reference>
<reference key="7">
    <citation type="journal article" date="1999" name="EMBO J.">
        <title>Transcriptional repression of the yeast CHA1 gene requires the chromatin-remodeling complex RSC.</title>
        <authorList>
            <person name="Moreira J.M.A."/>
            <person name="Holmberg S."/>
        </authorList>
    </citation>
    <scope>FUNCTION OF THE RSC COMPLEX</scope>
</reference>
<reference key="8">
    <citation type="journal article" date="1999" name="Mol. Cell">
        <title>Two functionally distinct forms of the RSC nucleosome-remodeling complex, containing essential AT hook, BAH, and bromodomains.</title>
        <authorList>
            <person name="Cairns B.R."/>
            <person name="Schlichter A."/>
            <person name="Erdjument-Bromage H."/>
            <person name="Tempst P."/>
            <person name="Kornberg R.D."/>
            <person name="Winston F."/>
        </authorList>
    </citation>
    <scope>COMPOSITION OF THE RSC COMPLEX</scope>
</reference>
<reference key="9">
    <citation type="journal article" date="2002" name="Genes Dev.">
        <title>Chromatin remodeling by RSC involves ATP-dependent DNA translocation.</title>
        <authorList>
            <person name="Saha A."/>
            <person name="Wittmeyer J."/>
            <person name="Cairns B.R."/>
        </authorList>
    </citation>
    <scope>FUNCTION OF THE RSC COMPLEX</scope>
</reference>
<reference key="10">
    <citation type="journal article" date="2002" name="Genetics">
        <title>Yeast RSC function is required for organization of the cellular cytoskeleton via an alternative PKC1 pathway.</title>
        <authorList>
            <person name="Chai B."/>
            <person name="Hsu J.-M."/>
            <person name="Du J."/>
            <person name="Laurent B.C."/>
        </authorList>
    </citation>
    <scope>FUNCTION OF THE RSC COMPLEX</scope>
</reference>
<reference key="11">
    <citation type="journal article" date="2003" name="EMBO J.">
        <title>The nuclear actin-related proteins Arp7 and Arp9: a dimeric module that cooperates with architectural proteins for chromatin remodeling.</title>
        <authorList>
            <person name="Szerlong H."/>
            <person name="Saha A."/>
            <person name="Cairns B.R."/>
        </authorList>
    </citation>
    <scope>FUNCTION</scope>
    <scope>HETERODIMERIC COMPLEX FORMATION WITH ARP9 WITHIN THE RSC COMPLEX</scope>
    <scope>MUTAGENESIS OF ALA-19; SER-33 AND GLU-411</scope>
</reference>
<reference key="12">
    <citation type="journal article" date="2003" name="Mol. Cell. Biol.">
        <title>The yeast RSC chromatin-remodeling complex is required for kinetochore function in chromosome segregation.</title>
        <authorList>
            <person name="Hsu J.-M."/>
            <person name="Huang J."/>
            <person name="Meluh P.B."/>
            <person name="Laurent B.C."/>
        </authorList>
    </citation>
    <scope>FUNCTION OF THE RSC COMPLEX</scope>
    <scope>SUBCELLULAR LOCATION</scope>
    <scope>INTERACTION OF THE RSC COMPLEX WITH HISTONES</scope>
</reference>
<reference key="13">
    <citation type="journal article" date="2003" name="Nature">
        <title>Global analysis of protein expression in yeast.</title>
        <authorList>
            <person name="Ghaemmaghami S."/>
            <person name="Huh W.-K."/>
            <person name="Bower K."/>
            <person name="Howson R.W."/>
            <person name="Belle A."/>
            <person name="Dephoure N."/>
            <person name="O'Shea E.K."/>
            <person name="Weissman J.S."/>
        </authorList>
    </citation>
    <scope>LEVEL OF PROTEIN EXPRESSION [LARGE SCALE ANALYSIS]</scope>
</reference>
<reference key="14">
    <citation type="journal article" date="2003" name="Nat. Struct. Biol.">
        <title>Structural analysis of the yeast SWI/SNF chromatin remodeling complex.</title>
        <authorList>
            <person name="Smith C.L."/>
            <person name="Horowitz-Scherer R."/>
            <person name="Flanagan J.F."/>
            <person name="Woodcock C.L."/>
            <person name="Peterson C.L."/>
        </authorList>
    </citation>
    <scope>3D-STRUCTURE MODELING OF THE SWI/SNF COMPLEX</scope>
    <scope>ELECTRON MICROSCOPY OF THE SWI/SNF COMPLEX</scope>
</reference>
<reference key="15">
    <citation type="journal article" date="2006" name="Genetics">
        <title>The RSC chromatin remodeling complex bears an essential fungal-specific protein module with broad functional roles.</title>
        <authorList>
            <person name="Wilson B."/>
            <person name="Erdjument-Bromage H."/>
            <person name="Tempst P."/>
            <person name="Cairns B.R."/>
        </authorList>
    </citation>
    <scope>INTERACTION WITH NPL6</scope>
</reference>
<protein>
    <recommendedName>
        <fullName>Actin-related protein 7</fullName>
    </recommendedName>
    <alternativeName>
        <fullName>Actin-like protein ARP7</fullName>
    </alternativeName>
    <alternativeName>
        <fullName>Chromatin structure-remodeling complex protein ARP7</fullName>
    </alternativeName>
    <alternativeName>
        <fullName>SWI/SNF complex component ARP7</fullName>
    </alternativeName>
</protein>